<name>GRIR_STRM4</name>
<sequence>MRFQVEREVLAEGIGWVARGLAVRPSVPILSGVVVNAEGDTLTLSGFDYEVSTRVELKANVEESGTVLIPGRRLADIAKVLPDVPIEFNVDQTKVYVQCDSNSFVLNALPLDEYPTLPKLPTVCGSVEGDQFARAVSQVAVVASRDDALPVLTGIGVNFDGEIMKLNATDRYRFAIRELAWKPEGTPSSSSVLVPARTLLDFAKSLNKGDLVKIALSDEGNLLGLHAGTRQMTCRLLEGTLPDYEKLFPKEFTSFGAVEVSRLVEALKRVSLVLERNSSVALDFTDGELVLQAGGADDDRATSRMAASLEGESIDIAFNPSFLLDGLTNLDASWAQFSFTSSNGKAVIMGKSSVDAEADTSARYLVMPVRFHR</sequence>
<proteinExistence type="evidence at protein level"/>
<gene>
    <name evidence="3" type="primary">griR</name>
    <name evidence="5" type="synonym">dnaN2</name>
</gene>
<protein>
    <recommendedName>
        <fullName evidence="3">Beta sliding clamp homolog GriR</fullName>
        <shortName>Beta clamp GriR</shortName>
        <shortName>Sliding clamp GriR</shortName>
    </recommendedName>
</protein>
<keyword id="KW-0046">Antibiotic resistance</keyword>
<keyword id="KW-0963">Cytoplasm</keyword>
<keyword id="KW-0235">DNA replication</keyword>
<keyword id="KW-0238">DNA-binding</keyword>
<keyword id="KW-0239">DNA-directed DNA polymerase</keyword>
<keyword id="KW-0548">Nucleotidyltransferase</keyword>
<keyword id="KW-0808">Transferase</keyword>
<dbReference type="EMBL" id="KP211414">
    <property type="protein sequence ID" value="AKC91855.1"/>
    <property type="molecule type" value="Genomic_DNA"/>
</dbReference>
<dbReference type="SMR" id="A0A0E3URH8"/>
<dbReference type="GO" id="GO:0005737">
    <property type="term" value="C:cytoplasm"/>
    <property type="evidence" value="ECO:0007669"/>
    <property type="project" value="UniProtKB-SubCell"/>
</dbReference>
<dbReference type="GO" id="GO:0009360">
    <property type="term" value="C:DNA polymerase III complex"/>
    <property type="evidence" value="ECO:0007669"/>
    <property type="project" value="InterPro"/>
</dbReference>
<dbReference type="GO" id="GO:0008408">
    <property type="term" value="F:3'-5' exonuclease activity"/>
    <property type="evidence" value="ECO:0007669"/>
    <property type="project" value="InterPro"/>
</dbReference>
<dbReference type="GO" id="GO:0003677">
    <property type="term" value="F:DNA binding"/>
    <property type="evidence" value="ECO:0007669"/>
    <property type="project" value="UniProtKB-KW"/>
</dbReference>
<dbReference type="GO" id="GO:0003887">
    <property type="term" value="F:DNA-directed DNA polymerase activity"/>
    <property type="evidence" value="ECO:0007669"/>
    <property type="project" value="UniProtKB-KW"/>
</dbReference>
<dbReference type="GO" id="GO:0006271">
    <property type="term" value="P:DNA strand elongation involved in DNA replication"/>
    <property type="evidence" value="ECO:0007669"/>
    <property type="project" value="TreeGrafter"/>
</dbReference>
<dbReference type="GO" id="GO:0046677">
    <property type="term" value="P:response to antibiotic"/>
    <property type="evidence" value="ECO:0007669"/>
    <property type="project" value="UniProtKB-KW"/>
</dbReference>
<dbReference type="CDD" id="cd00140">
    <property type="entry name" value="beta_clamp"/>
    <property type="match status" value="1"/>
</dbReference>
<dbReference type="FunFam" id="3.10.150.10:FF:000005">
    <property type="entry name" value="Beta sliding clamp"/>
    <property type="match status" value="1"/>
</dbReference>
<dbReference type="Gene3D" id="3.10.150.10">
    <property type="entry name" value="DNA Polymerase III, subunit A, domain 2"/>
    <property type="match status" value="3"/>
</dbReference>
<dbReference type="InterPro" id="IPR046938">
    <property type="entry name" value="DNA_clamp_sf"/>
</dbReference>
<dbReference type="InterPro" id="IPR001001">
    <property type="entry name" value="DNA_polIII_beta"/>
</dbReference>
<dbReference type="InterPro" id="IPR022635">
    <property type="entry name" value="DNA_polIII_beta_C"/>
</dbReference>
<dbReference type="InterPro" id="IPR022637">
    <property type="entry name" value="DNA_polIII_beta_cen"/>
</dbReference>
<dbReference type="InterPro" id="IPR022634">
    <property type="entry name" value="DNA_polIII_beta_N"/>
</dbReference>
<dbReference type="NCBIfam" id="TIGR00663">
    <property type="entry name" value="dnan"/>
    <property type="match status" value="1"/>
</dbReference>
<dbReference type="PANTHER" id="PTHR30478:SF0">
    <property type="entry name" value="BETA SLIDING CLAMP"/>
    <property type="match status" value="1"/>
</dbReference>
<dbReference type="PANTHER" id="PTHR30478">
    <property type="entry name" value="DNA POLYMERASE III SUBUNIT BETA"/>
    <property type="match status" value="1"/>
</dbReference>
<dbReference type="Pfam" id="PF00712">
    <property type="entry name" value="DNA_pol3_beta"/>
    <property type="match status" value="1"/>
</dbReference>
<dbReference type="Pfam" id="PF02767">
    <property type="entry name" value="DNA_pol3_beta_2"/>
    <property type="match status" value="1"/>
</dbReference>
<dbReference type="Pfam" id="PF02768">
    <property type="entry name" value="DNA_pol3_beta_3"/>
    <property type="match status" value="1"/>
</dbReference>
<dbReference type="PIRSF" id="PIRSF000804">
    <property type="entry name" value="DNA_pol_III_b"/>
    <property type="match status" value="1"/>
</dbReference>
<dbReference type="SMART" id="SM00480">
    <property type="entry name" value="POL3Bc"/>
    <property type="match status" value="1"/>
</dbReference>
<dbReference type="SUPFAM" id="SSF55979">
    <property type="entry name" value="DNA clamp"/>
    <property type="match status" value="3"/>
</dbReference>
<comment type="function">
    <text evidence="1 2">A homolog of the beta sliding clamp protein encoded within the biosynthetic cluster for griselimycin synthesis (PubMed:26045430). Upon expression in S.coelicolor A3(2), which is susceptible to this antibiotic, confers resistance to griselimycin (PubMed:26045430). The beta sliding clamp confers DNA tethering and processivity to DNA polymerases and other proteins (By similarity). Acts as a clamp, forming a ring around DNA (a reaction catalyzed by the clamp-loading complex) which diffuses in an ATP-independent manner freely and bidirectionally along dsDNA (By similarity). Initially characterized for its ability to contact the catalytic subunit of DNA polymerase III (Pol III), a complex, multichain enzyme responsible for most of the replicative synthesis in bacteria; Pol III exhibits 3'-5' exonuclease proofreading activity (By similarity). The beta chain is required for initiation of replication as well as for processivity of DNA replication (By similarity).</text>
</comment>
<comment type="subunit">
    <text evidence="1">Forms a ring-shaped head-to-tail homodimer around DNA which binds and tethers DNA polymerases and other proteins to the DNA. The DNA replisome complex has a single clamp-loading complex (3 tau and 1 each of delta, delta', psi and chi subunits) which binds 3 Pol III cores (1 core on the leading strand and 2 on the lagging strand) each with a beta sliding clamp dimer. Additional proteins in the replisome are other copies of gamma, psi and chi, Ssb, DNA helicase and RNA primase.</text>
</comment>
<comment type="subcellular location">
    <subcellularLocation>
        <location evidence="1">Cytoplasm</location>
    </subcellularLocation>
</comment>
<comment type="similarity">
    <text evidence="4">Belongs to the beta sliding clamp family.</text>
</comment>
<accession>A0A0E3URH8</accession>
<reference key="1">
    <citation type="journal article" date="2015" name="Science">
        <title>Targeting DnaN for tuberculosis therapy using novel griselimycins.</title>
        <authorList>
            <person name="Kling A."/>
            <person name="Lukat P."/>
            <person name="Almeida D.V."/>
            <person name="Bauer A."/>
            <person name="Fontaine E."/>
            <person name="Sordello S."/>
            <person name="Zaburannyi N."/>
            <person name="Herrmann J."/>
            <person name="Wenzel S.C."/>
            <person name="Konig C."/>
            <person name="Ammerman N.C."/>
            <person name="Barrio M.B."/>
            <person name="Borchers K."/>
            <person name="Bordon-Pallier F."/>
            <person name="Bronstrup M."/>
            <person name="Courtemanche G."/>
            <person name="Gerlitz M."/>
            <person name="Geslin M."/>
            <person name="Hammann P."/>
            <person name="Heinz D.W."/>
            <person name="Hoffmann H."/>
            <person name="Klieber S."/>
            <person name="Kohlmann M."/>
            <person name="Kurz M."/>
            <person name="Lair C."/>
            <person name="Matter H."/>
            <person name="Nuermberger E."/>
            <person name="Tyagi S."/>
            <person name="Fraisse L."/>
            <person name="Grosset J.H."/>
            <person name="Lagrange S."/>
            <person name="Muller R."/>
        </authorList>
    </citation>
    <scope>NUCLEOTIDE SEQUENCE [GENOMIC DNA]</scope>
    <scope>FUNCTION</scope>
    <scope>ANTIBIOTIC-BINDING</scope>
    <source>
        <strain>DSM 40835 / JCM 4881 / NRRL 2957 / CGMCC 4.1390 / DS 9461</strain>
    </source>
</reference>
<feature type="chain" id="PRO_0000441111" description="Beta sliding clamp homolog GriR">
    <location>
        <begin position="1"/>
        <end position="373"/>
    </location>
</feature>
<evidence type="ECO:0000250" key="1">
    <source>
        <dbReference type="UniProtKB" id="P0A988"/>
    </source>
</evidence>
<evidence type="ECO:0000269" key="2">
    <source>
    </source>
</evidence>
<evidence type="ECO:0000303" key="3">
    <source>
    </source>
</evidence>
<evidence type="ECO:0000305" key="4"/>
<evidence type="ECO:0000305" key="5">
    <source>
    </source>
</evidence>
<organism>
    <name type="scientific">Streptomyces muensis</name>
    <dbReference type="NCBI Taxonomy" id="1077944"/>
    <lineage>
        <taxon>Bacteria</taxon>
        <taxon>Bacillati</taxon>
        <taxon>Actinomycetota</taxon>
        <taxon>Actinomycetes</taxon>
        <taxon>Kitasatosporales</taxon>
        <taxon>Streptomycetaceae</taxon>
        <taxon>Streptomyces</taxon>
    </lineage>
</organism>